<keyword id="KW-0007">Acetylation</keyword>
<keyword id="KW-0152">Cholesterol biosynthesis</keyword>
<keyword id="KW-0153">Cholesterol metabolism</keyword>
<keyword id="KW-0963">Cytoplasm</keyword>
<keyword id="KW-0238">DNA-binding</keyword>
<keyword id="KW-0256">Endoplasmic reticulum</keyword>
<keyword id="KW-0325">Glycoprotein</keyword>
<keyword id="KW-0444">Lipid biosynthesis</keyword>
<keyword id="KW-0443">Lipid metabolism</keyword>
<keyword id="KW-0472">Membrane</keyword>
<keyword id="KW-0539">Nucleus</keyword>
<keyword id="KW-0560">Oxidoreductase</keyword>
<keyword id="KW-0597">Phosphoprotein</keyword>
<keyword id="KW-0675">Receptor</keyword>
<keyword id="KW-1185">Reference proteome</keyword>
<keyword id="KW-0752">Steroid biosynthesis</keyword>
<keyword id="KW-0753">Steroid metabolism</keyword>
<keyword id="KW-0756">Sterol biosynthesis</keyword>
<keyword id="KW-1207">Sterol metabolism</keyword>
<keyword id="KW-0812">Transmembrane</keyword>
<keyword id="KW-1133">Transmembrane helix</keyword>
<comment type="function">
    <text evidence="3 4">Catalyzes the reduction of the C14-unsaturated bond of lanosterol, as part of the metabolic pathway leading to cholesterol biosynthesis (By similarity). Plays a critical role in myeloid cell cholesterol biosynthesis which is essential to both myeloid cell growth and functional maturation (By similarity). Mediates the activation of NADPH oxidases, perhaps by maintaining critical levels of cholesterol required for membrane lipid raft formation during neutrophil differentiation (By similarity). Anchors the lamina and the heterochromatin to the inner nuclear membrane (By similarity).</text>
</comment>
<comment type="catalytic activity">
    <reaction evidence="3">
        <text>5alpha-cholest-8,14-dien-3beta-ol + NADPH + H(+) = 5alpha-cholest-8-en-3beta-ol + NADP(+)</text>
        <dbReference type="Rhea" id="RHEA:46456"/>
        <dbReference type="ChEBI" id="CHEBI:15378"/>
        <dbReference type="ChEBI" id="CHEBI:16608"/>
        <dbReference type="ChEBI" id="CHEBI:57783"/>
        <dbReference type="ChEBI" id="CHEBI:58349"/>
        <dbReference type="ChEBI" id="CHEBI:86131"/>
    </reaction>
</comment>
<comment type="catalytic activity">
    <reaction evidence="3">
        <text>4,4-dimethyl-5alpha-cholesta-8,24-dien-3beta-ol + NADP(+) = 4,4-dimethyl-5alpha-cholesta-8,14,24-trien-3beta-ol + NADPH + H(+)</text>
        <dbReference type="Rhea" id="RHEA:18561"/>
        <dbReference type="ChEBI" id="CHEBI:15378"/>
        <dbReference type="ChEBI" id="CHEBI:17813"/>
        <dbReference type="ChEBI" id="CHEBI:18364"/>
        <dbReference type="ChEBI" id="CHEBI:57783"/>
        <dbReference type="ChEBI" id="CHEBI:58349"/>
        <dbReference type="EC" id="1.3.1.70"/>
    </reaction>
</comment>
<comment type="catalytic activity">
    <reaction evidence="3">
        <text>4,4-dimethyl-8,14-cholestadien-3beta-ol + NADPH + H(+) = 4,4-dimethyl-5alpha-cholest-8-en-3beta-ol + NADP(+)</text>
        <dbReference type="Rhea" id="RHEA:46812"/>
        <dbReference type="ChEBI" id="CHEBI:15378"/>
        <dbReference type="ChEBI" id="CHEBI:57783"/>
        <dbReference type="ChEBI" id="CHEBI:58349"/>
        <dbReference type="ChEBI" id="CHEBI:78904"/>
        <dbReference type="ChEBI" id="CHEBI:87044"/>
    </reaction>
</comment>
<comment type="pathway">
    <text>Steroid biosynthesis; cholesterol biosynthesis.</text>
</comment>
<comment type="subunit">
    <text evidence="3">Interacts with CBX5. Interacts with DNA. Interaction with DNA is sequence independent with higher affinity for supercoiled and relaxed circular DNA than linear DNA. Interacts with lamin B. Interacts with CLNK. Interacts with TMEM147; promoting LBR localization to the nucleus inner membrane.</text>
</comment>
<comment type="subcellular location">
    <subcellularLocation>
        <location evidence="3">Nucleus inner membrane</location>
        <topology evidence="5">Multi-pass membrane protein</topology>
    </subcellularLocation>
    <subcellularLocation>
        <location evidence="3">Nucleus</location>
    </subcellularLocation>
    <subcellularLocation>
        <location evidence="3">Cytoplasm</location>
    </subcellularLocation>
    <subcellularLocation>
        <location evidence="3">Endoplasmic reticulum membrane</location>
    </subcellularLocation>
    <text evidence="3">Nucleus; nuclear rim.</text>
</comment>
<comment type="domain">
    <text evidence="2">The Tudor domain may not recognize methylation marks, but rather bind unassembled free histone H3.</text>
</comment>
<comment type="PTM">
    <text evidence="3">Phosphorylated by CDK1 in mitosis when the inner nuclear membrane breaks down into vesicles that dissociate from the lamina and the chromatin (By similarity). It is phosphorylated by different protein kinases in interphase when the membrane is associated with these structures (By similarity). Phosphorylation of LBR and HP1 proteins may be responsible for some of the alterations in chromatin organization and nuclear structure which occur at various times during the cell cycle (By similarity). Phosphorylated by SRPK1 (By similarity). In late anaphase LBR is dephosphorylated, probably by PP1 and/or PP2A, allowing reassociation with chromatin (By similarity).</text>
</comment>
<comment type="similarity">
    <text evidence="9">Belongs to the ERG4/ERG24 family.</text>
</comment>
<reference key="1">
    <citation type="journal article" date="1997" name="J. Biochem.">
        <title>cDNA cloning of nuclear localization signal binding protein NBP60, a rat homologue of lamin B receptor, and identification of binding sites of human lamin B receptor for nuclear localization signals and chromatin.</title>
        <authorList>
            <person name="Kawahire S."/>
            <person name="Takeuchi M."/>
            <person name="Gohshi T."/>
            <person name="Sasagawa S."/>
            <person name="Shimada M."/>
            <person name="Takahashi M."/>
            <person name="Abe T.K."/>
            <person name="Ueda T."/>
            <person name="Kuwano R."/>
            <person name="Hikawa A."/>
            <person name="Ichimura T."/>
            <person name="Omata S."/>
            <person name="Horigome T."/>
        </authorList>
    </citation>
    <scope>NUCLEOTIDE SEQUENCE [MRNA]</scope>
    <source>
        <strain>Fischer 344</strain>
        <tissue>Liver</tissue>
    </source>
</reference>
<reference key="2">
    <citation type="journal article" date="2002" name="Mol. Cell. Proteomics">
        <title>Mapping sites of O-GlcNAc modification using affinity tags for serine and threonine post-translational modifications.</title>
        <authorList>
            <person name="Wells L."/>
            <person name="Vosseller K."/>
            <person name="Cole R.N."/>
            <person name="Cronshaw J.M."/>
            <person name="Matunis M.J."/>
            <person name="Hart G.W."/>
        </authorList>
    </citation>
    <scope>GLYCOSYLATION AT SER-96</scope>
    <scope>IDENTIFICATION BY MASS SPECTROMETRY</scope>
</reference>
<reference key="3">
    <citation type="journal article" date="2006" name="Biochim. Biophys. Acta">
        <title>Sterol dependent regulation of human TM7SF2 gene expression: role of the encoded 3beta-hydroxysterol Delta14-reductase in human cholesterol biosynthesis.</title>
        <authorList>
            <person name="Bennati A.M."/>
            <person name="Castelli M."/>
            <person name="Della Fazia M.A."/>
            <person name="Beccari T."/>
            <person name="Caruso D."/>
            <person name="Servillo G."/>
            <person name="Roberti R."/>
        </authorList>
    </citation>
    <scope>SUBCELLULAR LOCATION</scope>
</reference>
<dbReference type="EC" id="1.3.1.70" evidence="3"/>
<dbReference type="EMBL" id="AB002466">
    <property type="protein sequence ID" value="BAA20471.1"/>
    <property type="molecule type" value="mRNA"/>
</dbReference>
<dbReference type="PIR" id="JC5567">
    <property type="entry name" value="JC5567"/>
</dbReference>
<dbReference type="RefSeq" id="NP_604448.1">
    <property type="nucleotide sequence ID" value="NM_134453.1"/>
</dbReference>
<dbReference type="SMR" id="O08984"/>
<dbReference type="BioGRID" id="250124">
    <property type="interactions" value="3"/>
</dbReference>
<dbReference type="FunCoup" id="O08984">
    <property type="interactions" value="1656"/>
</dbReference>
<dbReference type="STRING" id="10116.ENSRNOP00000069002"/>
<dbReference type="GlyCosmos" id="O08984">
    <property type="glycosylation" value="1 site, No reported glycans"/>
</dbReference>
<dbReference type="GlyGen" id="O08984">
    <property type="glycosylation" value="1 site, 1 O-linked glycan (1 site)"/>
</dbReference>
<dbReference type="iPTMnet" id="O08984"/>
<dbReference type="PhosphoSitePlus" id="O08984"/>
<dbReference type="jPOST" id="O08984"/>
<dbReference type="UCSC" id="RGD:620813">
    <property type="organism name" value="rat"/>
</dbReference>
<dbReference type="AGR" id="RGD:620813"/>
<dbReference type="RGD" id="620813">
    <property type="gene designation" value="Lbr"/>
</dbReference>
<dbReference type="InParanoid" id="O08984"/>
<dbReference type="PhylomeDB" id="O08984"/>
<dbReference type="UniPathway" id="UPA00063"/>
<dbReference type="PRO" id="PR:O08984"/>
<dbReference type="Proteomes" id="UP000002494">
    <property type="component" value="Unplaced"/>
</dbReference>
<dbReference type="GO" id="GO:0005737">
    <property type="term" value="C:cytoplasm"/>
    <property type="evidence" value="ECO:0000266"/>
    <property type="project" value="RGD"/>
</dbReference>
<dbReference type="GO" id="GO:0005789">
    <property type="term" value="C:endoplasmic reticulum membrane"/>
    <property type="evidence" value="ECO:0000250"/>
    <property type="project" value="UniProtKB"/>
</dbReference>
<dbReference type="GO" id="GO:0016020">
    <property type="term" value="C:membrane"/>
    <property type="evidence" value="ECO:0000266"/>
    <property type="project" value="RGD"/>
</dbReference>
<dbReference type="GO" id="GO:0005635">
    <property type="term" value="C:nuclear envelope"/>
    <property type="evidence" value="ECO:0000314"/>
    <property type="project" value="RGD"/>
</dbReference>
<dbReference type="GO" id="GO:0005637">
    <property type="term" value="C:nuclear inner membrane"/>
    <property type="evidence" value="ECO:0000266"/>
    <property type="project" value="RGD"/>
</dbReference>
<dbReference type="GO" id="GO:0005652">
    <property type="term" value="C:nuclear lamina"/>
    <property type="evidence" value="ECO:0000266"/>
    <property type="project" value="RGD"/>
</dbReference>
<dbReference type="GO" id="GO:0031965">
    <property type="term" value="C:nuclear membrane"/>
    <property type="evidence" value="ECO:0000266"/>
    <property type="project" value="RGD"/>
</dbReference>
<dbReference type="GO" id="GO:0005643">
    <property type="term" value="C:nuclear pore"/>
    <property type="evidence" value="ECO:0000314"/>
    <property type="project" value="RGD"/>
</dbReference>
<dbReference type="GO" id="GO:0005634">
    <property type="term" value="C:nucleus"/>
    <property type="evidence" value="ECO:0000266"/>
    <property type="project" value="RGD"/>
</dbReference>
<dbReference type="GO" id="GO:0140463">
    <property type="term" value="F:chromatin-protein adaptor activity"/>
    <property type="evidence" value="ECO:0000266"/>
    <property type="project" value="RGD"/>
</dbReference>
<dbReference type="GO" id="GO:0070087">
    <property type="term" value="F:chromo shadow domain binding"/>
    <property type="evidence" value="ECO:0000266"/>
    <property type="project" value="RGD"/>
</dbReference>
<dbReference type="GO" id="GO:0050613">
    <property type="term" value="F:Delta14-sterol reductase activity"/>
    <property type="evidence" value="ECO:0000250"/>
    <property type="project" value="UniProtKB"/>
</dbReference>
<dbReference type="GO" id="GO:0003677">
    <property type="term" value="F:DNA binding"/>
    <property type="evidence" value="ECO:0007669"/>
    <property type="project" value="UniProtKB-KW"/>
</dbReference>
<dbReference type="GO" id="GO:0070402">
    <property type="term" value="F:NADPH binding"/>
    <property type="evidence" value="ECO:0000250"/>
    <property type="project" value="UniProtKB"/>
</dbReference>
<dbReference type="GO" id="GO:0008139">
    <property type="term" value="F:nuclear localization sequence binding"/>
    <property type="evidence" value="ECO:0000353"/>
    <property type="project" value="RGD"/>
</dbReference>
<dbReference type="GO" id="GO:0051087">
    <property type="term" value="F:protein-folding chaperone binding"/>
    <property type="evidence" value="ECO:0000353"/>
    <property type="project" value="RGD"/>
</dbReference>
<dbReference type="GO" id="GO:0006695">
    <property type="term" value="P:cholesterol biosynthetic process"/>
    <property type="evidence" value="ECO:0000250"/>
    <property type="project" value="UniProtKB"/>
</dbReference>
<dbReference type="GO" id="GO:0030223">
    <property type="term" value="P:neutrophil differentiation"/>
    <property type="evidence" value="ECO:0000250"/>
    <property type="project" value="UniProtKB"/>
</dbReference>
<dbReference type="GO" id="GO:0060816">
    <property type="term" value="P:random inactivation of X chromosome"/>
    <property type="evidence" value="ECO:0000266"/>
    <property type="project" value="RGD"/>
</dbReference>
<dbReference type="CDD" id="cd20381">
    <property type="entry name" value="Tudor_LBR"/>
    <property type="match status" value="1"/>
</dbReference>
<dbReference type="FunFam" id="1.20.120.1630:FF:000001">
    <property type="entry name" value="delta(14)-sterol reductase isoform X1"/>
    <property type="match status" value="1"/>
</dbReference>
<dbReference type="FunFam" id="2.30.30.140:FF:000058">
    <property type="entry name" value="Lamin B receptor"/>
    <property type="match status" value="1"/>
</dbReference>
<dbReference type="Gene3D" id="1.20.120.1630">
    <property type="match status" value="1"/>
</dbReference>
<dbReference type="Gene3D" id="2.30.30.140">
    <property type="match status" value="1"/>
</dbReference>
<dbReference type="InterPro" id="IPR001171">
    <property type="entry name" value="ERG24_DHCR-like"/>
</dbReference>
<dbReference type="InterPro" id="IPR019023">
    <property type="entry name" value="Lamin-B_rcpt_of_tudor"/>
</dbReference>
<dbReference type="InterPro" id="IPR018083">
    <property type="entry name" value="Sterol_reductase_CS"/>
</dbReference>
<dbReference type="InterPro" id="IPR002999">
    <property type="entry name" value="Tudor"/>
</dbReference>
<dbReference type="PANTHER" id="PTHR21257">
    <property type="entry name" value="DELTA(14)-STEROL REDUCTASE"/>
    <property type="match status" value="1"/>
</dbReference>
<dbReference type="PANTHER" id="PTHR21257:SF55">
    <property type="entry name" value="DELTA(14)-STEROL REDUCTASE LBR"/>
    <property type="match status" value="1"/>
</dbReference>
<dbReference type="Pfam" id="PF01222">
    <property type="entry name" value="ERG4_ERG24"/>
    <property type="match status" value="1"/>
</dbReference>
<dbReference type="Pfam" id="PF09465">
    <property type="entry name" value="LBR_tudor"/>
    <property type="match status" value="1"/>
</dbReference>
<dbReference type="SMART" id="SM00333">
    <property type="entry name" value="TUDOR"/>
    <property type="match status" value="1"/>
</dbReference>
<dbReference type="SUPFAM" id="SSF63748">
    <property type="entry name" value="Tudor/PWWP/MBT"/>
    <property type="match status" value="1"/>
</dbReference>
<dbReference type="PROSITE" id="PS01017">
    <property type="entry name" value="STEROL_REDUCT_1"/>
    <property type="match status" value="1"/>
</dbReference>
<dbReference type="PROSITE" id="PS01018">
    <property type="entry name" value="STEROL_REDUCT_2"/>
    <property type="match status" value="1"/>
</dbReference>
<sequence length="620" mass="70724">MPGRKFADGEVVRGRWPGSSLYYEVEILSHDSTSQLYTVKYKDGTELELKESDIKPLKSFKQRKSGSTSSSPSRRRSSRSRSRSRSRSPGRAPKGSRRSVSASYQADAKEKEMRREILQVKLTPLVLKPFANSVSVYNGEPEHMEKSATPPKNKQERVILSTEDSYIATQYSLRPRREEVKPKHRVRGTNLVTRGPVPLGTFQVTTPQRRDLEFGGVPGALLIMLGLPACVFLLLLQCAQKDPGLLQFPPPLPALRELWEARVCGVYLLWFFLQALFSLLPVGKVVEGTPLVDGRRLKYRLNGLYAFILTSAAVGTAVFWDIELYYLYTHFLQFALAAIVFSVVLSVYLYARSLKVPRDELSPASSGNAVYDFFIGRELNPRIGAFDLKFFCELRPGLIGWVVINLVMLLAEMKVQERSAPSLAMTLVNSFQLLYVVDALWFEEALLTTMDIIHDGFGFMLAFGDLVWVPFTYSLQAFYLVNHPQDLSWPLTSVIIALKLCGYVIFRCANSQKNAFRKNPTDPKLAHLKTIPTSTWKSLLVSGWWGFVRHPNYLGDLIMALAWSLPCGFNHILPYFYVIYFTALLIHREARDEHQCRRKYGLAWEKYCQRVPYRIFPYIY</sequence>
<gene>
    <name type="primary">Lbr</name>
</gene>
<protein>
    <recommendedName>
        <fullName>Delta(14)-sterol reductase LBR</fullName>
        <shortName>Delta-14-SR</shortName>
        <ecNumber evidence="3">1.3.1.70</ecNumber>
    </recommendedName>
    <alternativeName>
        <fullName evidence="3">3-beta-hydroxysterol Delta (14)-reductase</fullName>
    </alternativeName>
    <alternativeName>
        <fullName>C-14 sterol reductase</fullName>
        <shortName>C14SR</shortName>
    </alternativeName>
    <alternativeName>
        <fullName evidence="3">Integral nuclear envelope inner membrane protein</fullName>
    </alternativeName>
    <alternativeName>
        <fullName evidence="3">Lamin-B receptor</fullName>
    </alternativeName>
    <alternativeName>
        <fullName evidence="8">NBP60</fullName>
    </alternativeName>
    <alternativeName>
        <fullName>Sterol C14-reductase</fullName>
    </alternativeName>
</protein>
<accession>O08984</accession>
<name>LBR_RAT</name>
<evidence type="ECO:0000250" key="1"/>
<evidence type="ECO:0000250" key="2">
    <source>
        <dbReference type="UniProtKB" id="P23913"/>
    </source>
</evidence>
<evidence type="ECO:0000250" key="3">
    <source>
        <dbReference type="UniProtKB" id="Q14739"/>
    </source>
</evidence>
<evidence type="ECO:0000250" key="4">
    <source>
        <dbReference type="UniProtKB" id="Q3U9G9"/>
    </source>
</evidence>
<evidence type="ECO:0000255" key="5"/>
<evidence type="ECO:0000256" key="6">
    <source>
        <dbReference type="SAM" id="MobiDB-lite"/>
    </source>
</evidence>
<evidence type="ECO:0000269" key="7">
    <source>
    </source>
</evidence>
<evidence type="ECO:0000303" key="8">
    <source>
    </source>
</evidence>
<evidence type="ECO:0000305" key="9"/>
<feature type="chain" id="PRO_0000227911" description="Delta(14)-sterol reductase LBR">
    <location>
        <begin position="1"/>
        <end position="620"/>
    </location>
</feature>
<feature type="topological domain" description="Nuclear" evidence="5">
    <location>
        <begin position="1"/>
        <end position="215"/>
    </location>
</feature>
<feature type="transmembrane region" description="Helical" evidence="5">
    <location>
        <begin position="216"/>
        <end position="236"/>
    </location>
</feature>
<feature type="transmembrane region" description="Helical" evidence="5">
    <location>
        <begin position="263"/>
        <end position="283"/>
    </location>
</feature>
<feature type="transmembrane region" description="Helical" evidence="5">
    <location>
        <begin position="304"/>
        <end position="324"/>
    </location>
</feature>
<feature type="transmembrane region" description="Helical" evidence="5">
    <location>
        <begin position="331"/>
        <end position="351"/>
    </location>
</feature>
<feature type="transmembrane region" description="Helical" evidence="5">
    <location>
        <begin position="452"/>
        <end position="472"/>
    </location>
</feature>
<feature type="transmembrane region" description="Helical" evidence="5">
    <location>
        <begin position="486"/>
        <end position="506"/>
    </location>
</feature>
<feature type="transmembrane region" description="Helical" evidence="5">
    <location>
        <begin position="525"/>
        <end position="547"/>
    </location>
</feature>
<feature type="transmembrane region" description="Helical" evidence="5">
    <location>
        <begin position="566"/>
        <end position="586"/>
    </location>
</feature>
<feature type="domain" description="Tudor">
    <location>
        <begin position="1"/>
        <end position="62"/>
    </location>
</feature>
<feature type="region of interest" description="Disordered" evidence="6">
    <location>
        <begin position="52"/>
        <end position="111"/>
    </location>
</feature>
<feature type="compositionally biased region" description="Basic residues" evidence="6">
    <location>
        <begin position="73"/>
        <end position="88"/>
    </location>
</feature>
<feature type="modified residue" description="N6-acetyllysine" evidence="3">
    <location>
        <position position="55"/>
    </location>
</feature>
<feature type="modified residue" description="Phosphoserine" evidence="3">
    <location>
        <position position="59"/>
    </location>
</feature>
<feature type="modified residue" description="Phosphoserine" evidence="4">
    <location>
        <position position="67"/>
    </location>
</feature>
<feature type="modified residue" description="Phosphoserine; by CDK1" evidence="3">
    <location>
        <position position="71"/>
    </location>
</feature>
<feature type="modified residue" description="Phosphoserine; by CDK1" evidence="1">
    <location>
        <position position="86"/>
    </location>
</feature>
<feature type="modified residue" description="Phosphoserine" evidence="3">
    <location>
        <position position="88"/>
    </location>
</feature>
<feature type="modified residue" description="Phosphoserine" evidence="3">
    <location>
        <position position="99"/>
    </location>
</feature>
<feature type="modified residue" description="Phosphoserine" evidence="3">
    <location>
        <position position="101"/>
    </location>
</feature>
<feature type="modified residue" description="Phosphothreonine" evidence="3">
    <location>
        <position position="123"/>
    </location>
</feature>
<feature type="modified residue" description="Phosphoserine" evidence="3">
    <location>
        <position position="133"/>
    </location>
</feature>
<feature type="modified residue" description="Phosphothreonine" evidence="3">
    <location>
        <position position="205"/>
    </location>
</feature>
<feature type="modified residue" description="N6-acetyllysine" evidence="3">
    <location>
        <position position="599"/>
    </location>
</feature>
<feature type="modified residue" description="N6-acetyllysine" evidence="3">
    <location>
        <position position="606"/>
    </location>
</feature>
<feature type="glycosylation site" description="O-linked (GlcNAc) serine" evidence="7">
    <location>
        <position position="96"/>
    </location>
</feature>
<organism>
    <name type="scientific">Rattus norvegicus</name>
    <name type="common">Rat</name>
    <dbReference type="NCBI Taxonomy" id="10116"/>
    <lineage>
        <taxon>Eukaryota</taxon>
        <taxon>Metazoa</taxon>
        <taxon>Chordata</taxon>
        <taxon>Craniata</taxon>
        <taxon>Vertebrata</taxon>
        <taxon>Euteleostomi</taxon>
        <taxon>Mammalia</taxon>
        <taxon>Eutheria</taxon>
        <taxon>Euarchontoglires</taxon>
        <taxon>Glires</taxon>
        <taxon>Rodentia</taxon>
        <taxon>Myomorpha</taxon>
        <taxon>Muroidea</taxon>
        <taxon>Muridae</taxon>
        <taxon>Murinae</taxon>
        <taxon>Rattus</taxon>
    </lineage>
</organism>
<proteinExistence type="evidence at protein level"/>